<comment type="function">
    <text evidence="1">Forms part of the ribosomal stalk which helps the ribosome interact with GTP-bound translation factors. Is thus essential for accurate translation.</text>
</comment>
<comment type="subunit">
    <text evidence="1">Homodimer. Part of the ribosomal stalk of the 50S ribosomal subunit. Forms a multimeric L10(L12)X complex, where L10 forms an elongated spine to which 2 to 4 L12 dimers bind in a sequential fashion. Binds GTP-bound translation factors.</text>
</comment>
<comment type="similarity">
    <text evidence="1">Belongs to the bacterial ribosomal protein bL12 family.</text>
</comment>
<reference key="1">
    <citation type="submission" date="2008-02" db="EMBL/GenBank/DDBJ databases">
        <title>Complete sequence of Haemophilus somnus 2336.</title>
        <authorList>
            <consortium name="US DOE Joint Genome Institute"/>
            <person name="Siddaramappa S."/>
            <person name="Duncan A.J."/>
            <person name="Challacombe J.F."/>
            <person name="Rainey D."/>
            <person name="Gillaspy A.F."/>
            <person name="Carson M."/>
            <person name="Gipson J."/>
            <person name="Gipson M."/>
            <person name="Bruce D."/>
            <person name="Detter J.C."/>
            <person name="Han C.S."/>
            <person name="Land M."/>
            <person name="Tapia R."/>
            <person name="Thompson L.S."/>
            <person name="Orvis J."/>
            <person name="Zaitshik J."/>
            <person name="Barnes G."/>
            <person name="Brettin T.S."/>
            <person name="Dyer D.W."/>
            <person name="Inzana T.J."/>
        </authorList>
    </citation>
    <scope>NUCLEOTIDE SEQUENCE [LARGE SCALE GENOMIC DNA]</scope>
    <source>
        <strain>2336</strain>
    </source>
</reference>
<feature type="chain" id="PRO_1000079798" description="Large ribosomal subunit protein bL12">
    <location>
        <begin position="1"/>
        <end position="122"/>
    </location>
</feature>
<proteinExistence type="inferred from homology"/>
<gene>
    <name evidence="1" type="primary">rplL</name>
    <name type="ordered locus">HSM_0039</name>
</gene>
<sequence>MSLTNEQIIEAIASKTVTEIVELISAMEEKFGVSAAAAAVAVAAGPAEVAEEKTEFDVVLAEAGANKVAVIKAVRGATGLGLKEAKDLVESAPANLKEGISKAEAEALKKELEEAGAKVEIK</sequence>
<accession>B0UUZ7</accession>
<organism>
    <name type="scientific">Histophilus somni (strain 2336)</name>
    <name type="common">Haemophilus somnus</name>
    <dbReference type="NCBI Taxonomy" id="228400"/>
    <lineage>
        <taxon>Bacteria</taxon>
        <taxon>Pseudomonadati</taxon>
        <taxon>Pseudomonadota</taxon>
        <taxon>Gammaproteobacteria</taxon>
        <taxon>Pasteurellales</taxon>
        <taxon>Pasteurellaceae</taxon>
        <taxon>Histophilus</taxon>
    </lineage>
</organism>
<dbReference type="EMBL" id="CP000947">
    <property type="protein sequence ID" value="ACA32029.1"/>
    <property type="molecule type" value="Genomic_DNA"/>
</dbReference>
<dbReference type="RefSeq" id="WP_011608325.1">
    <property type="nucleotide sequence ID" value="NC_010519.1"/>
</dbReference>
<dbReference type="SMR" id="B0UUZ7"/>
<dbReference type="STRING" id="228400.HSM_0039"/>
<dbReference type="GeneID" id="31486314"/>
<dbReference type="KEGG" id="hsm:HSM_0039"/>
<dbReference type="HOGENOM" id="CLU_086499_3_2_6"/>
<dbReference type="GO" id="GO:0022625">
    <property type="term" value="C:cytosolic large ribosomal subunit"/>
    <property type="evidence" value="ECO:0007669"/>
    <property type="project" value="TreeGrafter"/>
</dbReference>
<dbReference type="GO" id="GO:0003729">
    <property type="term" value="F:mRNA binding"/>
    <property type="evidence" value="ECO:0007669"/>
    <property type="project" value="TreeGrafter"/>
</dbReference>
<dbReference type="GO" id="GO:0003735">
    <property type="term" value="F:structural constituent of ribosome"/>
    <property type="evidence" value="ECO:0007669"/>
    <property type="project" value="InterPro"/>
</dbReference>
<dbReference type="GO" id="GO:0006412">
    <property type="term" value="P:translation"/>
    <property type="evidence" value="ECO:0007669"/>
    <property type="project" value="UniProtKB-UniRule"/>
</dbReference>
<dbReference type="CDD" id="cd00387">
    <property type="entry name" value="Ribosomal_L7_L12"/>
    <property type="match status" value="1"/>
</dbReference>
<dbReference type="FunFam" id="3.30.1390.10:FF:000001">
    <property type="entry name" value="50S ribosomal protein L7/L12"/>
    <property type="match status" value="1"/>
</dbReference>
<dbReference type="Gene3D" id="3.30.1390.10">
    <property type="match status" value="1"/>
</dbReference>
<dbReference type="Gene3D" id="1.20.5.710">
    <property type="entry name" value="Single helix bin"/>
    <property type="match status" value="1"/>
</dbReference>
<dbReference type="HAMAP" id="MF_00368">
    <property type="entry name" value="Ribosomal_bL12"/>
    <property type="match status" value="1"/>
</dbReference>
<dbReference type="InterPro" id="IPR000206">
    <property type="entry name" value="Ribosomal_bL12"/>
</dbReference>
<dbReference type="InterPro" id="IPR013823">
    <property type="entry name" value="Ribosomal_bL12_C"/>
</dbReference>
<dbReference type="InterPro" id="IPR014719">
    <property type="entry name" value="Ribosomal_bL12_C/ClpS-like"/>
</dbReference>
<dbReference type="InterPro" id="IPR008932">
    <property type="entry name" value="Ribosomal_bL12_oligo"/>
</dbReference>
<dbReference type="InterPro" id="IPR036235">
    <property type="entry name" value="Ribosomal_bL12_oligo_N_sf"/>
</dbReference>
<dbReference type="NCBIfam" id="TIGR00855">
    <property type="entry name" value="L12"/>
    <property type="match status" value="1"/>
</dbReference>
<dbReference type="PANTHER" id="PTHR45987">
    <property type="entry name" value="39S RIBOSOMAL PROTEIN L12"/>
    <property type="match status" value="1"/>
</dbReference>
<dbReference type="PANTHER" id="PTHR45987:SF4">
    <property type="entry name" value="LARGE RIBOSOMAL SUBUNIT PROTEIN BL12M"/>
    <property type="match status" value="1"/>
</dbReference>
<dbReference type="Pfam" id="PF00542">
    <property type="entry name" value="Ribosomal_L12"/>
    <property type="match status" value="1"/>
</dbReference>
<dbReference type="Pfam" id="PF16320">
    <property type="entry name" value="Ribosomal_L12_N"/>
    <property type="match status" value="1"/>
</dbReference>
<dbReference type="SUPFAM" id="SSF54736">
    <property type="entry name" value="ClpS-like"/>
    <property type="match status" value="1"/>
</dbReference>
<dbReference type="SUPFAM" id="SSF48300">
    <property type="entry name" value="Ribosomal protein L7/12, oligomerisation (N-terminal) domain"/>
    <property type="match status" value="1"/>
</dbReference>
<name>RL7_HISS2</name>
<protein>
    <recommendedName>
        <fullName evidence="1">Large ribosomal subunit protein bL12</fullName>
    </recommendedName>
    <alternativeName>
        <fullName evidence="2">50S ribosomal protein L7/L12</fullName>
    </alternativeName>
</protein>
<keyword id="KW-0687">Ribonucleoprotein</keyword>
<keyword id="KW-0689">Ribosomal protein</keyword>
<evidence type="ECO:0000255" key="1">
    <source>
        <dbReference type="HAMAP-Rule" id="MF_00368"/>
    </source>
</evidence>
<evidence type="ECO:0000305" key="2"/>